<organism>
    <name type="scientific">Volvox carteri</name>
    <name type="common">Green alga</name>
    <dbReference type="NCBI Taxonomy" id="3067"/>
    <lineage>
        <taxon>Eukaryota</taxon>
        <taxon>Viridiplantae</taxon>
        <taxon>Chlorophyta</taxon>
        <taxon>core chlorophytes</taxon>
        <taxon>Chlorophyceae</taxon>
        <taxon>CS clade</taxon>
        <taxon>Chlamydomonadales</taxon>
        <taxon>Volvocaceae</taxon>
        <taxon>Volvox</taxon>
    </lineage>
</organism>
<name>PGKH_VOLCA</name>
<proteinExistence type="evidence at transcript level"/>
<evidence type="ECO:0000250" key="1"/>
<evidence type="ECO:0000250" key="2">
    <source>
        <dbReference type="UniProtKB" id="P00558"/>
    </source>
</evidence>
<evidence type="ECO:0000250" key="3">
    <source>
        <dbReference type="UniProtKB" id="Q7SIB7"/>
    </source>
</evidence>
<evidence type="ECO:0000255" key="4"/>
<evidence type="ECO:0000305" key="5"/>
<protein>
    <recommendedName>
        <fullName>Phosphoglycerate kinase, chloroplastic</fullName>
        <ecNumber evidence="2">2.7.2.3</ecNumber>
    </recommendedName>
</protein>
<sequence>MALSMKMRANARVVSGRRVAAVAPRVVPFSSVARPVLRSTFAPEVSIDIRRAGRSRIVVEAVKKSVGDLGKADLEGKRVFVRADLNVPLDKKTLAITDDTRIRAAVPTLKYLLDNGAKVLLTSHLGRPKGGPEDKYRLTPVVARLSELLGKEVKKVDDCIGPSVEQAVASLKSGELLLLENVRFYKEEEKNDPEFAKKLASNADLYVNDAFGTAHRAHASTEGVTKFLKPSVAGFLLQKELDYLDGAVSAPKRPFVAIVGGSKVSSKITVIEKLMEKCDKIIIGGGMIFTFYKARGLKVGSSLVEEDKLELAKNLEAIAKAKGVQLLLPSDVVVADKFDANANTQTVSVEAIPDGWMGLDIGPDSIKTFQDALADAKTVVWNGPMGVFEFPKFAVGTVAIANTLSELTPKGAITIIGGGDSVAAVEQAGVAEKMSHISTGGGASLELLEGKVLPGVAALDEK</sequence>
<accession>Q9SBN4</accession>
<reference key="1">
    <citation type="journal article" date="1999" name="Curr. Genet.">
        <title>Volvox germline-specific genes that are putative targets of RegA repression encode chloroplast proteins.</title>
        <authorList>
            <person name="Meissner M."/>
            <person name="Stark K."/>
            <person name="Cresnar B."/>
            <person name="Kirk D.L."/>
            <person name="Schmitt R."/>
        </authorList>
    </citation>
    <scope>NUCLEOTIDE SEQUENCE [MRNA]</scope>
    <source>
        <strain>f. Nagariensis</strain>
    </source>
</reference>
<gene>
    <name type="primary">PGK</name>
</gene>
<comment type="catalytic activity">
    <reaction evidence="2">
        <text>(2R)-3-phosphoglycerate + ATP = (2R)-3-phospho-glyceroyl phosphate + ADP</text>
        <dbReference type="Rhea" id="RHEA:14801"/>
        <dbReference type="ChEBI" id="CHEBI:30616"/>
        <dbReference type="ChEBI" id="CHEBI:57604"/>
        <dbReference type="ChEBI" id="CHEBI:58272"/>
        <dbReference type="ChEBI" id="CHEBI:456216"/>
        <dbReference type="EC" id="2.7.2.3"/>
    </reaction>
</comment>
<comment type="cofactor">
    <cofactor evidence="2">
        <name>Mg(2+)</name>
        <dbReference type="ChEBI" id="CHEBI:18420"/>
    </cofactor>
</comment>
<comment type="pathway">
    <text>Carbohydrate biosynthesis; Calvin cycle.</text>
</comment>
<comment type="subunit">
    <text evidence="1">Monomer.</text>
</comment>
<comment type="subcellular location">
    <subcellularLocation>
        <location evidence="1">Plastid</location>
        <location evidence="1">Chloroplast</location>
    </subcellularLocation>
</comment>
<comment type="similarity">
    <text evidence="5">Belongs to the phosphoglycerate kinase family.</text>
</comment>
<dbReference type="EC" id="2.7.2.3" evidence="2"/>
<dbReference type="EMBL" id="AF110782">
    <property type="protein sequence ID" value="AAD55564.1"/>
    <property type="molecule type" value="mRNA"/>
</dbReference>
<dbReference type="SMR" id="Q9SBN4"/>
<dbReference type="KEGG" id="vcn:VOLCADRAFT_81546"/>
<dbReference type="OMA" id="GPETNKK"/>
<dbReference type="UniPathway" id="UPA00116"/>
<dbReference type="GO" id="GO:0009507">
    <property type="term" value="C:chloroplast"/>
    <property type="evidence" value="ECO:0007669"/>
    <property type="project" value="UniProtKB-SubCell"/>
</dbReference>
<dbReference type="GO" id="GO:0005829">
    <property type="term" value="C:cytosol"/>
    <property type="evidence" value="ECO:0007669"/>
    <property type="project" value="TreeGrafter"/>
</dbReference>
<dbReference type="GO" id="GO:0043531">
    <property type="term" value="F:ADP binding"/>
    <property type="evidence" value="ECO:0007669"/>
    <property type="project" value="TreeGrafter"/>
</dbReference>
<dbReference type="GO" id="GO:0005524">
    <property type="term" value="F:ATP binding"/>
    <property type="evidence" value="ECO:0007669"/>
    <property type="project" value="UniProtKB-KW"/>
</dbReference>
<dbReference type="GO" id="GO:0046872">
    <property type="term" value="F:metal ion binding"/>
    <property type="evidence" value="ECO:0007669"/>
    <property type="project" value="UniProtKB-KW"/>
</dbReference>
<dbReference type="GO" id="GO:0004618">
    <property type="term" value="F:phosphoglycerate kinase activity"/>
    <property type="evidence" value="ECO:0007669"/>
    <property type="project" value="UniProtKB-EC"/>
</dbReference>
<dbReference type="GO" id="GO:0006094">
    <property type="term" value="P:gluconeogenesis"/>
    <property type="evidence" value="ECO:0007669"/>
    <property type="project" value="TreeGrafter"/>
</dbReference>
<dbReference type="GO" id="GO:0006096">
    <property type="term" value="P:glycolytic process"/>
    <property type="evidence" value="ECO:0007669"/>
    <property type="project" value="InterPro"/>
</dbReference>
<dbReference type="GO" id="GO:0019253">
    <property type="term" value="P:reductive pentose-phosphate cycle"/>
    <property type="evidence" value="ECO:0007669"/>
    <property type="project" value="UniProtKB-UniPathway"/>
</dbReference>
<dbReference type="CDD" id="cd00318">
    <property type="entry name" value="Phosphoglycerate_kinase"/>
    <property type="match status" value="1"/>
</dbReference>
<dbReference type="FunFam" id="3.40.50.1260:FF:000003">
    <property type="entry name" value="Phosphoglycerate kinase"/>
    <property type="match status" value="1"/>
</dbReference>
<dbReference type="FunFam" id="3.40.50.1260:FF:000006">
    <property type="entry name" value="Phosphoglycerate kinase"/>
    <property type="match status" value="1"/>
</dbReference>
<dbReference type="FunFam" id="3.40.50.1260:FF:000017">
    <property type="entry name" value="Phosphoglycerate kinase"/>
    <property type="match status" value="1"/>
</dbReference>
<dbReference type="Gene3D" id="3.40.50.1260">
    <property type="entry name" value="Phosphoglycerate kinase, N-terminal domain"/>
    <property type="match status" value="2"/>
</dbReference>
<dbReference type="HAMAP" id="MF_00145">
    <property type="entry name" value="Phosphoglyc_kinase"/>
    <property type="match status" value="1"/>
</dbReference>
<dbReference type="InterPro" id="IPR001576">
    <property type="entry name" value="Phosphoglycerate_kinase"/>
</dbReference>
<dbReference type="InterPro" id="IPR015911">
    <property type="entry name" value="Phosphoglycerate_kinase_CS"/>
</dbReference>
<dbReference type="InterPro" id="IPR015824">
    <property type="entry name" value="Phosphoglycerate_kinase_N"/>
</dbReference>
<dbReference type="InterPro" id="IPR036043">
    <property type="entry name" value="Phosphoglycerate_kinase_sf"/>
</dbReference>
<dbReference type="PANTHER" id="PTHR11406">
    <property type="entry name" value="PHOSPHOGLYCERATE KINASE"/>
    <property type="match status" value="1"/>
</dbReference>
<dbReference type="PANTHER" id="PTHR11406:SF23">
    <property type="entry name" value="PHOSPHOGLYCERATE KINASE 1, CHLOROPLASTIC-RELATED"/>
    <property type="match status" value="1"/>
</dbReference>
<dbReference type="Pfam" id="PF00162">
    <property type="entry name" value="PGK"/>
    <property type="match status" value="1"/>
</dbReference>
<dbReference type="PIRSF" id="PIRSF000724">
    <property type="entry name" value="Pgk"/>
    <property type="match status" value="1"/>
</dbReference>
<dbReference type="PRINTS" id="PR00477">
    <property type="entry name" value="PHGLYCKINASE"/>
</dbReference>
<dbReference type="SUPFAM" id="SSF53748">
    <property type="entry name" value="Phosphoglycerate kinase"/>
    <property type="match status" value="1"/>
</dbReference>
<dbReference type="PROSITE" id="PS00111">
    <property type="entry name" value="PGLYCERATE_KINASE"/>
    <property type="match status" value="1"/>
</dbReference>
<feature type="transit peptide" description="Chloroplast" evidence="4">
    <location>
        <begin position="1"/>
        <end position="61"/>
    </location>
</feature>
<feature type="chain" id="PRO_0000023893" description="Phosphoglycerate kinase, chloroplastic">
    <location>
        <begin position="62"/>
        <end position="462"/>
    </location>
</feature>
<feature type="binding site" evidence="2">
    <location>
        <position position="83"/>
    </location>
    <ligand>
        <name>(2R)-3-phosphoglycerate</name>
        <dbReference type="ChEBI" id="CHEBI:58272"/>
    </ligand>
</feature>
<feature type="binding site" evidence="3">
    <location>
        <position position="84"/>
    </location>
    <ligand>
        <name>(2R)-3-phosphoglycerate</name>
        <dbReference type="ChEBI" id="CHEBI:58272"/>
    </ligand>
</feature>
<feature type="binding site" evidence="3">
    <location>
        <position position="86"/>
    </location>
    <ligand>
        <name>(2R)-3-phosphoglycerate</name>
        <dbReference type="ChEBI" id="CHEBI:58272"/>
    </ligand>
</feature>
<feature type="binding site" evidence="3">
    <location>
        <position position="101"/>
    </location>
    <ligand>
        <name>(2R)-3-phosphoglycerate</name>
        <dbReference type="ChEBI" id="CHEBI:58272"/>
    </ligand>
</feature>
<feature type="binding site" evidence="2">
    <location>
        <position position="123"/>
    </location>
    <ligand>
        <name>(2R)-3-phosphoglycerate</name>
        <dbReference type="ChEBI" id="CHEBI:58272"/>
    </ligand>
</feature>
<feature type="binding site" evidence="3">
    <location>
        <position position="124"/>
    </location>
    <ligand>
        <name>(2R)-3-phosphoglycerate</name>
        <dbReference type="ChEBI" id="CHEBI:58272"/>
    </ligand>
</feature>
<feature type="binding site" evidence="2">
    <location>
        <position position="126"/>
    </location>
    <ligand>
        <name>(2R)-3-phosphoglycerate</name>
        <dbReference type="ChEBI" id="CHEBI:58272"/>
    </ligand>
</feature>
<feature type="binding site" evidence="3">
    <location>
        <position position="127"/>
    </location>
    <ligand>
        <name>(2R)-3-phosphoglycerate</name>
        <dbReference type="ChEBI" id="CHEBI:58272"/>
    </ligand>
</feature>
<feature type="binding site" evidence="3">
    <location>
        <position position="183"/>
    </location>
    <ligand>
        <name>(2R)-3-phosphoglycerate</name>
        <dbReference type="ChEBI" id="CHEBI:58272"/>
    </ligand>
</feature>
<feature type="binding site" evidence="2">
    <location>
        <position position="215"/>
    </location>
    <ligand>
        <name>(2R)-3-phosphoglycerate</name>
        <dbReference type="ChEBI" id="CHEBI:58272"/>
    </ligand>
</feature>
<feature type="binding site" evidence="3">
    <location>
        <position position="216"/>
    </location>
    <ligand>
        <name>(2R)-3-phosphoglycerate</name>
        <dbReference type="ChEBI" id="CHEBI:58272"/>
    </ligand>
</feature>
<feature type="binding site" evidence="2">
    <location>
        <position position="261"/>
    </location>
    <ligand>
        <name>ADP</name>
        <dbReference type="ChEBI" id="CHEBI:456216"/>
    </ligand>
</feature>
<feature type="binding site" evidence="2">
    <location>
        <position position="261"/>
    </location>
    <ligand>
        <name>CDP</name>
        <dbReference type="ChEBI" id="CHEBI:58069"/>
    </ligand>
</feature>
<feature type="binding site" evidence="3">
    <location>
        <position position="263"/>
    </location>
    <ligand>
        <name>AMP</name>
        <dbReference type="ChEBI" id="CHEBI:456215"/>
    </ligand>
</feature>
<feature type="binding site" evidence="3">
    <location>
        <position position="267"/>
    </location>
    <ligand>
        <name>AMP</name>
        <dbReference type="ChEBI" id="CHEBI:456215"/>
    </ligand>
</feature>
<feature type="binding site" evidence="3">
    <location>
        <position position="267"/>
    </location>
    <ligand>
        <name>ATP</name>
        <dbReference type="ChEBI" id="CHEBI:30616"/>
    </ligand>
</feature>
<feature type="binding site" evidence="2">
    <location>
        <position position="285"/>
    </location>
    <ligand>
        <name>ADP</name>
        <dbReference type="ChEBI" id="CHEBI:456216"/>
    </ligand>
</feature>
<feature type="binding site" evidence="2">
    <location>
        <position position="285"/>
    </location>
    <ligand>
        <name>CDP</name>
        <dbReference type="ChEBI" id="CHEBI:58069"/>
    </ligand>
</feature>
<feature type="binding site" evidence="3">
    <location>
        <position position="286"/>
    </location>
    <ligand>
        <name>AMP</name>
        <dbReference type="ChEBI" id="CHEBI:456215"/>
    </ligand>
</feature>
<feature type="binding site" evidence="3">
    <location>
        <position position="286"/>
    </location>
    <ligand>
        <name>ATP</name>
        <dbReference type="ChEBI" id="CHEBI:30616"/>
    </ligand>
</feature>
<feature type="binding site" evidence="3">
    <location>
        <position position="358"/>
    </location>
    <ligand>
        <name>AMP</name>
        <dbReference type="ChEBI" id="CHEBI:456215"/>
    </ligand>
</feature>
<feature type="binding site" evidence="3">
    <location>
        <position position="358"/>
    </location>
    <ligand>
        <name>ATP</name>
        <dbReference type="ChEBI" id="CHEBI:30616"/>
    </ligand>
</feature>
<feature type="binding site" evidence="2">
    <location>
        <position position="383"/>
    </location>
    <ligand>
        <name>CDP</name>
        <dbReference type="ChEBI" id="CHEBI:58069"/>
    </ligand>
</feature>
<feature type="binding site" evidence="2">
    <location>
        <position position="388"/>
    </location>
    <ligand>
        <name>ADP</name>
        <dbReference type="ChEBI" id="CHEBI:456216"/>
    </ligand>
</feature>
<feature type="binding site" evidence="2">
    <location>
        <position position="388"/>
    </location>
    <ligand>
        <name>CDP</name>
        <dbReference type="ChEBI" id="CHEBI:58069"/>
    </ligand>
</feature>
<feature type="binding site" evidence="3">
    <location>
        <position position="389"/>
    </location>
    <ligand>
        <name>AMP</name>
        <dbReference type="ChEBI" id="CHEBI:456215"/>
    </ligand>
</feature>
<feature type="binding site" evidence="3">
    <location>
        <position position="389"/>
    </location>
    <ligand>
        <name>ATP</name>
        <dbReference type="ChEBI" id="CHEBI:30616"/>
    </ligand>
</feature>
<feature type="binding site" evidence="3">
    <location>
        <position position="420"/>
    </location>
    <ligand>
        <name>ATP</name>
        <dbReference type="ChEBI" id="CHEBI:30616"/>
    </ligand>
</feature>
<feature type="binding site" evidence="3">
    <location>
        <position position="420"/>
    </location>
    <ligand>
        <name>Mg(2+)</name>
        <dbReference type="ChEBI" id="CHEBI:18420"/>
    </ligand>
</feature>
<feature type="binding site" evidence="3">
    <location>
        <position position="421"/>
    </location>
    <ligand>
        <name>ATP</name>
        <dbReference type="ChEBI" id="CHEBI:30616"/>
    </ligand>
</feature>
<keyword id="KW-0067">ATP-binding</keyword>
<keyword id="KW-0113">Calvin cycle</keyword>
<keyword id="KW-0150">Chloroplast</keyword>
<keyword id="KW-0418">Kinase</keyword>
<keyword id="KW-0460">Magnesium</keyword>
<keyword id="KW-0479">Metal-binding</keyword>
<keyword id="KW-0547">Nucleotide-binding</keyword>
<keyword id="KW-0934">Plastid</keyword>
<keyword id="KW-0808">Transferase</keyword>
<keyword id="KW-0809">Transit peptide</keyword>